<proteinExistence type="evidence at protein level"/>
<dbReference type="EC" id="1.14.14.124" evidence="3"/>
<dbReference type="EC" id="1.14.14.125" evidence="3"/>
<dbReference type="EMBL" id="DQ176595">
    <property type="protein sequence ID" value="ABA02241.1"/>
    <property type="molecule type" value="Genomic_DNA"/>
</dbReference>
<dbReference type="SMR" id="Q3S2T8"/>
<dbReference type="GlyCosmos" id="Q3S2T8">
    <property type="glycosylation" value="2 sites, No reported glycans"/>
</dbReference>
<dbReference type="UniPathway" id="UPA00875"/>
<dbReference type="GO" id="GO:0005789">
    <property type="term" value="C:endoplasmic reticulum membrane"/>
    <property type="evidence" value="ECO:0007669"/>
    <property type="project" value="UniProtKB-SubCell"/>
</dbReference>
<dbReference type="GO" id="GO:0020037">
    <property type="term" value="F:heme binding"/>
    <property type="evidence" value="ECO:0007669"/>
    <property type="project" value="InterPro"/>
</dbReference>
<dbReference type="GO" id="GO:0005506">
    <property type="term" value="F:iron ion binding"/>
    <property type="evidence" value="ECO:0007669"/>
    <property type="project" value="InterPro"/>
</dbReference>
<dbReference type="GO" id="GO:0004497">
    <property type="term" value="F:monooxygenase activity"/>
    <property type="evidence" value="ECO:0007669"/>
    <property type="project" value="UniProtKB-KW"/>
</dbReference>
<dbReference type="GO" id="GO:0016705">
    <property type="term" value="F:oxidoreductase activity, acting on paired donors, with incorporation or reduction of molecular oxygen"/>
    <property type="evidence" value="ECO:0007669"/>
    <property type="project" value="InterPro"/>
</dbReference>
<dbReference type="GO" id="GO:0019748">
    <property type="term" value="P:secondary metabolic process"/>
    <property type="evidence" value="ECO:0007669"/>
    <property type="project" value="UniProtKB-ARBA"/>
</dbReference>
<dbReference type="CDD" id="cd11041">
    <property type="entry name" value="CYP503A1-like"/>
    <property type="match status" value="1"/>
</dbReference>
<dbReference type="FunFam" id="1.10.630.10:FF:000059">
    <property type="entry name" value="Cytochrome P450 monooxygenase"/>
    <property type="match status" value="1"/>
</dbReference>
<dbReference type="Gene3D" id="1.10.630.10">
    <property type="entry name" value="Cytochrome P450"/>
    <property type="match status" value="1"/>
</dbReference>
<dbReference type="InterPro" id="IPR001128">
    <property type="entry name" value="Cyt_P450"/>
</dbReference>
<dbReference type="InterPro" id="IPR002403">
    <property type="entry name" value="Cyt_P450_E_grp-IV"/>
</dbReference>
<dbReference type="InterPro" id="IPR036396">
    <property type="entry name" value="Cyt_P450_sf"/>
</dbReference>
<dbReference type="PANTHER" id="PTHR46206">
    <property type="entry name" value="CYTOCHROME P450"/>
    <property type="match status" value="1"/>
</dbReference>
<dbReference type="PANTHER" id="PTHR46206:SF2">
    <property type="entry name" value="CYTOCHROME P450 MONOOXYGENASE AUSG-RELATED"/>
    <property type="match status" value="1"/>
</dbReference>
<dbReference type="Pfam" id="PF00067">
    <property type="entry name" value="p450"/>
    <property type="match status" value="1"/>
</dbReference>
<dbReference type="PRINTS" id="PR00465">
    <property type="entry name" value="EP450IV"/>
</dbReference>
<dbReference type="SUPFAM" id="SSF48264">
    <property type="entry name" value="Cytochrome P450"/>
    <property type="match status" value="1"/>
</dbReference>
<feature type="chain" id="PRO_0000436283" description="Dihydromonacolin L monooxygenase mokC">
    <location>
        <begin position="1"/>
        <end position="524"/>
    </location>
</feature>
<feature type="topological domain" description="Cytoplasmic" evidence="10">
    <location>
        <begin position="1"/>
        <end position="25"/>
    </location>
</feature>
<feature type="transmembrane region" description="Helical; Signal-anchor for type II membrane protein" evidence="4">
    <location>
        <begin position="26"/>
        <end position="47"/>
    </location>
</feature>
<feature type="topological domain" description="Lumenal" evidence="10">
    <location>
        <begin position="48"/>
        <end position="524"/>
    </location>
</feature>
<feature type="binding site" description="axial binding residue" evidence="1">
    <location>
        <position position="467"/>
    </location>
    <ligand>
        <name>heme</name>
        <dbReference type="ChEBI" id="CHEBI:30413"/>
    </ligand>
    <ligandPart>
        <name>Fe</name>
        <dbReference type="ChEBI" id="CHEBI:18248"/>
    </ligandPart>
</feature>
<feature type="glycosylation site" description="N-linked (GlcNAc...) asparagine" evidence="5">
    <location>
        <position position="396"/>
    </location>
</feature>
<feature type="glycosylation site" description="N-linked (GlcNAc...) asparagine" evidence="5">
    <location>
        <position position="401"/>
    </location>
</feature>
<keyword id="KW-0256">Endoplasmic reticulum</keyword>
<keyword id="KW-0325">Glycoprotein</keyword>
<keyword id="KW-0349">Heme</keyword>
<keyword id="KW-0408">Iron</keyword>
<keyword id="KW-0472">Membrane</keyword>
<keyword id="KW-0479">Metal-binding</keyword>
<keyword id="KW-0503">Monooxygenase</keyword>
<keyword id="KW-0560">Oxidoreductase</keyword>
<keyword id="KW-0735">Signal-anchor</keyword>
<keyword id="KW-0812">Transmembrane</keyword>
<keyword id="KW-1133">Transmembrane helix</keyword>
<evidence type="ECO:0000250" key="1">
    <source>
        <dbReference type="UniProtKB" id="Q02928"/>
    </source>
</evidence>
<evidence type="ECO:0000250" key="2">
    <source>
        <dbReference type="UniProtKB" id="Q0C8M2"/>
    </source>
</evidence>
<evidence type="ECO:0000250" key="3">
    <source>
        <dbReference type="UniProtKB" id="Q9Y7C8"/>
    </source>
</evidence>
<evidence type="ECO:0000255" key="4"/>
<evidence type="ECO:0000255" key="5">
    <source>
        <dbReference type="PROSITE-ProRule" id="PRU00498"/>
    </source>
</evidence>
<evidence type="ECO:0000269" key="6">
    <source>
    </source>
</evidence>
<evidence type="ECO:0000269" key="7">
    <source>
    </source>
</evidence>
<evidence type="ECO:0000303" key="8">
    <source>
    </source>
</evidence>
<evidence type="ECO:0000303" key="9">
    <source>
    </source>
</evidence>
<evidence type="ECO:0000305" key="10"/>
<evidence type="ECO:0000312" key="11">
    <source>
        <dbReference type="EMBL" id="ABA02241.1"/>
    </source>
</evidence>
<accession>Q3S2T8</accession>
<reference key="1">
    <citation type="journal article" date="2008" name="J. Agric. Food Chem.">
        <title>Cloning and characterization of monacolin K biosynthetic gene cluster from Monascus pilosus.</title>
        <authorList>
            <person name="Chen Y.P."/>
            <person name="Tseng C.P."/>
            <person name="Liaw L.L."/>
            <person name="Wang C.L."/>
            <person name="Chen I.C."/>
            <person name="Wu W.J."/>
            <person name="Wu M.D."/>
            <person name="Yuan G.F."/>
        </authorList>
    </citation>
    <scope>NUCLEOTIDE SEQUENCE [GENOMIC DNA]</scope>
    <scope>FUNCTION</scope>
</reference>
<reference key="2">
    <citation type="journal article" date="2009" name="Biotechnol. Lett.">
        <title>Identification of mokB involved in monacolin K biosynthesis in Monascus pilosus.</title>
        <authorList>
            <person name="Sakai K."/>
            <person name="Kinoshita H."/>
            <person name="Nihira T."/>
        </authorList>
    </citation>
    <scope>FUNCTION</scope>
</reference>
<reference key="3">
    <citation type="journal article" date="2010" name="J. Agric. Food Chem.">
        <title>Identification of the mokH gene encoding transcription factor for the upregulation of monacolin K biosynthesis in Monascus pilosus.</title>
        <authorList>
            <person name="Chen Y.-P."/>
            <person name="Yuan G.-F."/>
            <person name="Hsieh S.-Y."/>
            <person name="Lin Y.-S."/>
            <person name="Wang W.-Y."/>
            <person name="Liaw L.-L."/>
            <person name="Tseng C.-P."/>
        </authorList>
    </citation>
    <scope>INDUCTION</scope>
</reference>
<reference key="4">
    <citation type="journal article" date="2011" name="Biosci. Biotechnol. Biochem.">
        <title>Simultaneous enrichment of deglycosylated ginsenosides and monacolin K in red ginseng by fermentation with Monascus pilosus.</title>
        <authorList>
            <person name="Hong S.Y."/>
            <person name="Oh J.H."/>
            <person name="Lee I."/>
        </authorList>
    </citation>
    <scope>BIOTECHNOLOGY</scope>
</reference>
<comment type="function">
    <text evidence="2 3 8 9">Cytochrome P450 monooxygenase; part of the gene cluster that mediates the biosynthesis of monakolin K, also known as lovastatin, and which acts as a potent competitive inhibitor of HMG-CoA reductase (PubMed:18578535). Monakolin K biosynthesis is performed in two stages (PubMed:19693441). The first stage is catalyzed by the nonaketide synthase mokA, which belongs to type I polyketide synthases and catalyzes the iterative nine-step formation of the polyketide (PubMed:18578535, PubMed:19693441). This PKS stage is completed by the action of dehydrogenase mokE, which catalyzes the NADPH-dependent reduction of the unsaturated tetra-, penta- and heptaketide intermediates that arise during the mokA-mediated biosynthesis of the nonaketide chain and leads to dihydromonacolin L (PubMed:19693441). Covalently bound dihydromonacolin L is released from mokA by the mokD esterase (By similarity). Conversion of dihydromonacolin L into monacolin L and then monacolin J is subsequently performed with the participation of molecular oxygen and P450 monoogygenase mokC (PubMed:19693441). Finally, mokF performs the conversion of monacoline J to monacoline K through the addition of the side-chain diketide moiety (2R)-2-methylbutanoate produced by the diketide synthase mokB (PubMed:19693441).</text>
</comment>
<comment type="catalytic activity">
    <reaction evidence="3">
        <text>dihydromonacolin L carboxylate + reduced [NADPH--hemoprotein reductase] + O2 = monacolin L carboxylate + oxidized [NADPH--hemoprotein reductase] + 2 H2O + H(+)</text>
        <dbReference type="Rhea" id="RHEA:42368"/>
        <dbReference type="Rhea" id="RHEA-COMP:11964"/>
        <dbReference type="Rhea" id="RHEA-COMP:11965"/>
        <dbReference type="ChEBI" id="CHEBI:15377"/>
        <dbReference type="ChEBI" id="CHEBI:15378"/>
        <dbReference type="ChEBI" id="CHEBI:15379"/>
        <dbReference type="ChEBI" id="CHEBI:57618"/>
        <dbReference type="ChEBI" id="CHEBI:58210"/>
        <dbReference type="ChEBI" id="CHEBI:79031"/>
        <dbReference type="ChEBI" id="CHEBI:79044"/>
        <dbReference type="EC" id="1.14.14.124"/>
    </reaction>
</comment>
<comment type="catalytic activity">
    <reaction evidence="3">
        <text>monacolin L carboxylate + reduced [NADPH--hemoprotein reductase] + O2 = monacolin J carboxylate + oxidized [NADPH--hemoprotein reductase] + H2O + H(+)</text>
        <dbReference type="Rhea" id="RHEA:29599"/>
        <dbReference type="Rhea" id="RHEA-COMP:11964"/>
        <dbReference type="Rhea" id="RHEA-COMP:11965"/>
        <dbReference type="ChEBI" id="CHEBI:15377"/>
        <dbReference type="ChEBI" id="CHEBI:15378"/>
        <dbReference type="ChEBI" id="CHEBI:15379"/>
        <dbReference type="ChEBI" id="CHEBI:57618"/>
        <dbReference type="ChEBI" id="CHEBI:58210"/>
        <dbReference type="ChEBI" id="CHEBI:79035"/>
        <dbReference type="ChEBI" id="CHEBI:79044"/>
        <dbReference type="EC" id="1.14.14.125"/>
    </reaction>
</comment>
<comment type="cofactor">
    <cofactor evidence="1">
        <name>heme</name>
        <dbReference type="ChEBI" id="CHEBI:30413"/>
    </cofactor>
    <text evidence="1">Binds 1 heme group per subunit.</text>
</comment>
<comment type="pathway">
    <text evidence="3">Polyketide biosynthesis; lovastatin biosynthesis.</text>
</comment>
<comment type="subcellular location">
    <subcellularLocation>
        <location evidence="3">Endoplasmic reticulum membrane</location>
        <topology evidence="3">Single-pass type II membrane protein</topology>
    </subcellularLocation>
</comment>
<comment type="induction">
    <text evidence="6">Expression is controlled by the monacolin K cluster transcription regulator mokH (PubMed:19968298).</text>
</comment>
<comment type="biotechnology">
    <text evidence="7">Monacoline K acts as an inhibitor of HMG-CoA reductase involved in cholesterogenesis (PubMed:21821946). Its hypocholesterolemic activity might be useful for lowering cholesterol levels in the blood and reduce artherosclerosis and coronary heart disease (PubMed:21821946).</text>
</comment>
<comment type="similarity">
    <text evidence="10">Belongs to the cytochrome P450 family.</text>
</comment>
<protein>
    <recommendedName>
        <fullName evidence="3">Dihydromonacolin L monooxygenase mokC</fullName>
        <ecNumber evidence="3">1.14.14.124</ecNumber>
        <ecNumber evidence="3">1.14.14.125</ecNumber>
    </recommendedName>
    <alternativeName>
        <fullName evidence="10">Cytochrome P450 monooxygenase mokC</fullName>
    </alternativeName>
    <alternativeName>
        <fullName evidence="3">Dihydromonacolin L hydroxylase</fullName>
    </alternativeName>
    <alternativeName>
        <fullName evidence="8">Monacolin K biosynthesis protein C</fullName>
    </alternativeName>
    <alternativeName>
        <fullName evidence="3">Monacolin L hydroxylase</fullName>
    </alternativeName>
</protein>
<name>MOKC_MONPI</name>
<sequence>MTVPTDTVSRRLQSLAWSDIKQHAPWLPSSRTLVSGFLCLILLQILYSRGRKSDLRVYNPKKWWELTTMRAKREFDANAPAWIEAWFSKNDQPLRFIVDSGYCTILPSSMADEFRKMKELCMYKFLGTDFHSHLPGFDGFKEVTRDAHLITKVVMNQFQTQAAKYTKPLADEASATIADIFGDNKEWHTAPVYNECLDLVTRTVTFIMVGDKLAHNEEWLDIAKHHAVTMAIQARQLRLWPVILRPIVHWLEPQGAKLRAQVRRARQLLEPIIQERRAEKAKCLAQGIEPPRYVDSIQWFEDTAKGQWYDAAGAQLAMDFAGIYGTSDLMIGGLVDIVRHPHLIEPLRNEIRTVIGEEGWTPASLYKLKLLDSCLKESQRVKPVECATMRSYALQNVTFSNGTFVPKGELVAVAADRMSNPEVWPEPKKYDPYRYMRLREDPDKAFSAQLENTNGNHIGFGWHPRACPGRFFASKEIKIMLAFLLIRYDWKLVPNEPLQYYRHSFSVRIHPATKLMMRRRDEDL</sequence>
<gene>
    <name evidence="8" type="primary">mokC</name>
</gene>
<organism evidence="11">
    <name type="scientific">Monascus pilosus</name>
    <name type="common">Red mold</name>
    <dbReference type="NCBI Taxonomy" id="89488"/>
    <lineage>
        <taxon>Eukaryota</taxon>
        <taxon>Fungi</taxon>
        <taxon>Dikarya</taxon>
        <taxon>Ascomycota</taxon>
        <taxon>Pezizomycotina</taxon>
        <taxon>Eurotiomycetes</taxon>
        <taxon>Eurotiomycetidae</taxon>
        <taxon>Eurotiales</taxon>
        <taxon>Aspergillaceae</taxon>
        <taxon>Monascus</taxon>
    </lineage>
</organism>